<reference key="1">
    <citation type="journal article" date="2005" name="Science">
        <title>The transcriptional landscape of the mammalian genome.</title>
        <authorList>
            <person name="Carninci P."/>
            <person name="Kasukawa T."/>
            <person name="Katayama S."/>
            <person name="Gough J."/>
            <person name="Frith M.C."/>
            <person name="Maeda N."/>
            <person name="Oyama R."/>
            <person name="Ravasi T."/>
            <person name="Lenhard B."/>
            <person name="Wells C."/>
            <person name="Kodzius R."/>
            <person name="Shimokawa K."/>
            <person name="Bajic V.B."/>
            <person name="Brenner S.E."/>
            <person name="Batalov S."/>
            <person name="Forrest A.R."/>
            <person name="Zavolan M."/>
            <person name="Davis M.J."/>
            <person name="Wilming L.G."/>
            <person name="Aidinis V."/>
            <person name="Allen J.E."/>
            <person name="Ambesi-Impiombato A."/>
            <person name="Apweiler R."/>
            <person name="Aturaliya R.N."/>
            <person name="Bailey T.L."/>
            <person name="Bansal M."/>
            <person name="Baxter L."/>
            <person name="Beisel K.W."/>
            <person name="Bersano T."/>
            <person name="Bono H."/>
            <person name="Chalk A.M."/>
            <person name="Chiu K.P."/>
            <person name="Choudhary V."/>
            <person name="Christoffels A."/>
            <person name="Clutterbuck D.R."/>
            <person name="Crowe M.L."/>
            <person name="Dalla E."/>
            <person name="Dalrymple B.P."/>
            <person name="de Bono B."/>
            <person name="Della Gatta G."/>
            <person name="di Bernardo D."/>
            <person name="Down T."/>
            <person name="Engstrom P."/>
            <person name="Fagiolini M."/>
            <person name="Faulkner G."/>
            <person name="Fletcher C.F."/>
            <person name="Fukushima T."/>
            <person name="Furuno M."/>
            <person name="Futaki S."/>
            <person name="Gariboldi M."/>
            <person name="Georgii-Hemming P."/>
            <person name="Gingeras T.R."/>
            <person name="Gojobori T."/>
            <person name="Green R.E."/>
            <person name="Gustincich S."/>
            <person name="Harbers M."/>
            <person name="Hayashi Y."/>
            <person name="Hensch T.K."/>
            <person name="Hirokawa N."/>
            <person name="Hill D."/>
            <person name="Huminiecki L."/>
            <person name="Iacono M."/>
            <person name="Ikeo K."/>
            <person name="Iwama A."/>
            <person name="Ishikawa T."/>
            <person name="Jakt M."/>
            <person name="Kanapin A."/>
            <person name="Katoh M."/>
            <person name="Kawasawa Y."/>
            <person name="Kelso J."/>
            <person name="Kitamura H."/>
            <person name="Kitano H."/>
            <person name="Kollias G."/>
            <person name="Krishnan S.P."/>
            <person name="Kruger A."/>
            <person name="Kummerfeld S.K."/>
            <person name="Kurochkin I.V."/>
            <person name="Lareau L.F."/>
            <person name="Lazarevic D."/>
            <person name="Lipovich L."/>
            <person name="Liu J."/>
            <person name="Liuni S."/>
            <person name="McWilliam S."/>
            <person name="Madan Babu M."/>
            <person name="Madera M."/>
            <person name="Marchionni L."/>
            <person name="Matsuda H."/>
            <person name="Matsuzawa S."/>
            <person name="Miki H."/>
            <person name="Mignone F."/>
            <person name="Miyake S."/>
            <person name="Morris K."/>
            <person name="Mottagui-Tabar S."/>
            <person name="Mulder N."/>
            <person name="Nakano N."/>
            <person name="Nakauchi H."/>
            <person name="Ng P."/>
            <person name="Nilsson R."/>
            <person name="Nishiguchi S."/>
            <person name="Nishikawa S."/>
            <person name="Nori F."/>
            <person name="Ohara O."/>
            <person name="Okazaki Y."/>
            <person name="Orlando V."/>
            <person name="Pang K.C."/>
            <person name="Pavan W.J."/>
            <person name="Pavesi G."/>
            <person name="Pesole G."/>
            <person name="Petrovsky N."/>
            <person name="Piazza S."/>
            <person name="Reed J."/>
            <person name="Reid J.F."/>
            <person name="Ring B.Z."/>
            <person name="Ringwald M."/>
            <person name="Rost B."/>
            <person name="Ruan Y."/>
            <person name="Salzberg S.L."/>
            <person name="Sandelin A."/>
            <person name="Schneider C."/>
            <person name="Schoenbach C."/>
            <person name="Sekiguchi K."/>
            <person name="Semple C.A."/>
            <person name="Seno S."/>
            <person name="Sessa L."/>
            <person name="Sheng Y."/>
            <person name="Shibata Y."/>
            <person name="Shimada H."/>
            <person name="Shimada K."/>
            <person name="Silva D."/>
            <person name="Sinclair B."/>
            <person name="Sperling S."/>
            <person name="Stupka E."/>
            <person name="Sugiura K."/>
            <person name="Sultana R."/>
            <person name="Takenaka Y."/>
            <person name="Taki K."/>
            <person name="Tammoja K."/>
            <person name="Tan S.L."/>
            <person name="Tang S."/>
            <person name="Taylor M.S."/>
            <person name="Tegner J."/>
            <person name="Teichmann S.A."/>
            <person name="Ueda H.R."/>
            <person name="van Nimwegen E."/>
            <person name="Verardo R."/>
            <person name="Wei C.L."/>
            <person name="Yagi K."/>
            <person name="Yamanishi H."/>
            <person name="Zabarovsky E."/>
            <person name="Zhu S."/>
            <person name="Zimmer A."/>
            <person name="Hide W."/>
            <person name="Bult C."/>
            <person name="Grimmond S.M."/>
            <person name="Teasdale R.D."/>
            <person name="Liu E.T."/>
            <person name="Brusic V."/>
            <person name="Quackenbush J."/>
            <person name="Wahlestedt C."/>
            <person name="Mattick J.S."/>
            <person name="Hume D.A."/>
            <person name="Kai C."/>
            <person name="Sasaki D."/>
            <person name="Tomaru Y."/>
            <person name="Fukuda S."/>
            <person name="Kanamori-Katayama M."/>
            <person name="Suzuki M."/>
            <person name="Aoki J."/>
            <person name="Arakawa T."/>
            <person name="Iida J."/>
            <person name="Imamura K."/>
            <person name="Itoh M."/>
            <person name="Kato T."/>
            <person name="Kawaji H."/>
            <person name="Kawagashira N."/>
            <person name="Kawashima T."/>
            <person name="Kojima M."/>
            <person name="Kondo S."/>
            <person name="Konno H."/>
            <person name="Nakano K."/>
            <person name="Ninomiya N."/>
            <person name="Nishio T."/>
            <person name="Okada M."/>
            <person name="Plessy C."/>
            <person name="Shibata K."/>
            <person name="Shiraki T."/>
            <person name="Suzuki S."/>
            <person name="Tagami M."/>
            <person name="Waki K."/>
            <person name="Watahiki A."/>
            <person name="Okamura-Oho Y."/>
            <person name="Suzuki H."/>
            <person name="Kawai J."/>
            <person name="Hayashizaki Y."/>
        </authorList>
    </citation>
    <scope>NUCLEOTIDE SEQUENCE [LARGE SCALE MRNA] (ISOFORMS 2 AND 3)</scope>
    <source>
        <strain>C57BL/6J</strain>
        <tissue>Embryonic head</tissue>
        <tissue>Head</tissue>
        <tissue>Tongue</tissue>
    </source>
</reference>
<reference key="2">
    <citation type="journal article" date="2004" name="Genome Res.">
        <title>The status, quality, and expansion of the NIH full-length cDNA project: the Mammalian Gene Collection (MGC).</title>
        <authorList>
            <consortium name="The MGC Project Team"/>
        </authorList>
    </citation>
    <scope>NUCLEOTIDE SEQUENCE [LARGE SCALE MRNA] (ISOFORM 1)</scope>
    <source>
        <strain>Czech II</strain>
        <tissue>Mammary tumor</tissue>
    </source>
</reference>
<reference key="3">
    <citation type="journal article" date="2010" name="Cell">
        <title>A tissue-specific atlas of mouse protein phosphorylation and expression.</title>
        <authorList>
            <person name="Huttlin E.L."/>
            <person name="Jedrychowski M.P."/>
            <person name="Elias J.E."/>
            <person name="Goswami T."/>
            <person name="Rad R."/>
            <person name="Beausoleil S.A."/>
            <person name="Villen J."/>
            <person name="Haas W."/>
            <person name="Sowa M.E."/>
            <person name="Gygi S.P."/>
        </authorList>
    </citation>
    <scope>PHOSPHORYLATION [LARGE SCALE ANALYSIS] AT SER-269</scope>
    <scope>IDENTIFICATION BY MASS SPECTROMETRY [LARGE SCALE ANALYSIS]</scope>
    <source>
        <tissue>Pancreas</tissue>
        <tissue>Testis</tissue>
    </source>
</reference>
<dbReference type="EMBL" id="AK009456">
    <property type="protein sequence ID" value="BAC25259.1"/>
    <property type="status" value="ALT_FRAME"/>
    <property type="molecule type" value="mRNA"/>
</dbReference>
<dbReference type="EMBL" id="AK077369">
    <property type="protein sequence ID" value="BAC36772.1"/>
    <property type="molecule type" value="mRNA"/>
</dbReference>
<dbReference type="EMBL" id="AK140814">
    <property type="protein sequence ID" value="BAE24486.1"/>
    <property type="molecule type" value="mRNA"/>
</dbReference>
<dbReference type="EMBL" id="BC023369">
    <property type="protein sequence ID" value="AAH23369.2"/>
    <property type="molecule type" value="mRNA"/>
</dbReference>
<dbReference type="CCDS" id="CCDS21026.1">
    <molecule id="Q8R3Y5-1"/>
</dbReference>
<dbReference type="RefSeq" id="NP_001116239.1">
    <property type="nucleotide sequence ID" value="NM_001122767.1"/>
</dbReference>
<dbReference type="RefSeq" id="NP_780316.3">
    <property type="nucleotide sequence ID" value="NM_175107.5"/>
</dbReference>
<dbReference type="SMR" id="Q8R3Y5"/>
<dbReference type="BioGRID" id="211418">
    <property type="interactions" value="1"/>
</dbReference>
<dbReference type="FunCoup" id="Q8R3Y5">
    <property type="interactions" value="1903"/>
</dbReference>
<dbReference type="GlyGen" id="Q8R3Y5">
    <property type="glycosylation" value="2 sites, 1 O-linked glycan (1 site)"/>
</dbReference>
<dbReference type="iPTMnet" id="Q8R3Y5"/>
<dbReference type="PhosphoSitePlus" id="Q8R3Y5"/>
<dbReference type="PaxDb" id="10090-ENSMUSP00000066803"/>
<dbReference type="PeptideAtlas" id="Q8R3Y5"/>
<dbReference type="Pumba" id="Q8R3Y5"/>
<dbReference type="DNASU" id="66367"/>
<dbReference type="GeneID" id="66367"/>
<dbReference type="KEGG" id="mmu:66367"/>
<dbReference type="UCSC" id="uc009fwp.2">
    <molecule id="Q8R3Y5-3"/>
    <property type="organism name" value="mouse"/>
</dbReference>
<dbReference type="AGR" id="MGI:1913617"/>
<dbReference type="MGI" id="MGI:1913617">
    <property type="gene designation" value="2310022A10Rik"/>
</dbReference>
<dbReference type="eggNOG" id="KOG3930">
    <property type="taxonomic scope" value="Eukaryota"/>
</dbReference>
<dbReference type="InParanoid" id="Q8R3Y5"/>
<dbReference type="OrthoDB" id="10067653at2759"/>
<dbReference type="PhylomeDB" id="Q8R3Y5"/>
<dbReference type="BioGRID-ORCS" id="66367">
    <property type="hits" value="1 hit in 78 CRISPR screens"/>
</dbReference>
<dbReference type="PRO" id="PR:Q8R3Y5"/>
<dbReference type="Proteomes" id="UP000000589">
    <property type="component" value="Unplaced"/>
</dbReference>
<dbReference type="RNAct" id="Q8R3Y5">
    <property type="molecule type" value="protein"/>
</dbReference>
<dbReference type="CDD" id="cd09531">
    <property type="entry name" value="SAM_CS047"/>
    <property type="match status" value="1"/>
</dbReference>
<dbReference type="FunFam" id="1.10.150.50:FF:000041">
    <property type="entry name" value="Chromosome 19 C19orf47 homolog"/>
    <property type="match status" value="1"/>
</dbReference>
<dbReference type="Gene3D" id="1.10.150.50">
    <property type="entry name" value="Transcription Factor, Ets-1"/>
    <property type="match status" value="1"/>
</dbReference>
<dbReference type="InterPro" id="IPR039161">
    <property type="entry name" value="C19orf47-like"/>
</dbReference>
<dbReference type="InterPro" id="IPR040772">
    <property type="entry name" value="C19orf47_SAM"/>
</dbReference>
<dbReference type="InterPro" id="IPR041477">
    <property type="entry name" value="DUF5577"/>
</dbReference>
<dbReference type="InterPro" id="IPR013761">
    <property type="entry name" value="SAM/pointed_sf"/>
</dbReference>
<dbReference type="PANTHER" id="PTHR21359">
    <property type="entry name" value="DUF5577 DOMAIN-CONTAINING PROTEIN"/>
    <property type="match status" value="1"/>
</dbReference>
<dbReference type="PANTHER" id="PTHR21359:SF1">
    <property type="entry name" value="DUF5577 DOMAIN-CONTAINING PROTEIN"/>
    <property type="match status" value="1"/>
</dbReference>
<dbReference type="Pfam" id="PF17740">
    <property type="entry name" value="DUF5577"/>
    <property type="match status" value="1"/>
</dbReference>
<dbReference type="Pfam" id="PF18017">
    <property type="entry name" value="SAM_4"/>
    <property type="match status" value="1"/>
</dbReference>
<dbReference type="SUPFAM" id="SSF47769">
    <property type="entry name" value="SAM/Pointed domain"/>
    <property type="match status" value="1"/>
</dbReference>
<name>CS047_MOUSE</name>
<keyword id="KW-0025">Alternative splicing</keyword>
<keyword id="KW-1017">Isopeptide bond</keyword>
<keyword id="KW-0597">Phosphoprotein</keyword>
<keyword id="KW-1185">Reference proteome</keyword>
<keyword id="KW-0832">Ubl conjugation</keyword>
<proteinExistence type="evidence at protein level"/>
<accession>Q8R3Y5</accession>
<accession>Q3US50</accession>
<accession>Q8BVL8</accession>
<accession>Q8C1M9</accession>
<protein>
    <recommendedName>
        <fullName>Uncharacterized protein C19orf47 homolog</fullName>
    </recommendedName>
</protein>
<evidence type="ECO:0000250" key="1">
    <source>
        <dbReference type="UniProtKB" id="Q8N9M1"/>
    </source>
</evidence>
<evidence type="ECO:0000256" key="2">
    <source>
        <dbReference type="SAM" id="MobiDB-lite"/>
    </source>
</evidence>
<evidence type="ECO:0000303" key="3">
    <source>
    </source>
</evidence>
<evidence type="ECO:0000305" key="4"/>
<evidence type="ECO:0007744" key="5">
    <source>
    </source>
</evidence>
<comment type="alternative products">
    <event type="alternative splicing"/>
    <isoform>
        <id>Q8R3Y5-1</id>
        <name>1</name>
        <sequence type="displayed"/>
    </isoform>
    <isoform>
        <id>Q8R3Y5-2</id>
        <name>2</name>
        <sequence type="described" ref="VSP_026277 VSP_026280"/>
    </isoform>
    <isoform>
        <id>Q8R3Y5-3</id>
        <name>3</name>
        <sequence type="described" ref="VSP_026277 VSP_026278 VSP_026279"/>
    </isoform>
</comment>
<comment type="miscellaneous">
    <molecule>Isoform 3</molecule>
    <text evidence="4">Due to an intron retention.</text>
</comment>
<comment type="sequence caution" evidence="4">
    <conflict type="frameshift">
        <sequence resource="EMBL-CDS" id="BAC25259"/>
    </conflict>
</comment>
<organism>
    <name type="scientific">Mus musculus</name>
    <name type="common">Mouse</name>
    <dbReference type="NCBI Taxonomy" id="10090"/>
    <lineage>
        <taxon>Eukaryota</taxon>
        <taxon>Metazoa</taxon>
        <taxon>Chordata</taxon>
        <taxon>Craniata</taxon>
        <taxon>Vertebrata</taxon>
        <taxon>Euteleostomi</taxon>
        <taxon>Mammalia</taxon>
        <taxon>Eutheria</taxon>
        <taxon>Euarchontoglires</taxon>
        <taxon>Glires</taxon>
        <taxon>Rodentia</taxon>
        <taxon>Myomorpha</taxon>
        <taxon>Muroidea</taxon>
        <taxon>Muridae</taxon>
        <taxon>Murinae</taxon>
        <taxon>Mus</taxon>
        <taxon>Mus</taxon>
    </lineage>
</organism>
<sequence length="413" mass="44410">MGFRIGKNLLFNLRKAPGSRVKARKTMVSVTMATSEWIQFFKEAGIPPGPAVNYAVMFVDNRIQKSMLLDLNKEIMNELGVTVVGDIIAILKHAKVVHRQDMCKAATESVPCNPSPLQGELRRGASSAASRMIANSLNHDSPPHTPTRRSDNSTSKISVTVSNKMAAKSAKAAALAHREEESLVVPTKRRRVTAEMEGKYIIHMPKGTTPRTRKILEQQQAAKGLHRTSVFDRLGAESKADTTTGTKPTGVFSRLGATPEMDEDLAWDSDNDSSSSSVLQYAGVLKKLGRGPTKASAQPALTVKAKAASSATSTATTPKLRRLALPSRPGLQKKPDSLPKVSILQRLGKAAVVSEAQDSQVTSTKSKSSAEVKFAIKRTLVGPRGSSSSESLGAQMDHAGTVSVFKRLGQRTF</sequence>
<feature type="chain" id="PRO_0000291861" description="Uncharacterized protein C19orf47 homolog">
    <location>
        <begin position="1"/>
        <end position="413"/>
    </location>
</feature>
<feature type="region of interest" description="Disordered" evidence="2">
    <location>
        <begin position="108"/>
        <end position="158"/>
    </location>
</feature>
<feature type="region of interest" description="Disordered" evidence="2">
    <location>
        <begin position="232"/>
        <end position="257"/>
    </location>
</feature>
<feature type="region of interest" description="Disordered" evidence="2">
    <location>
        <begin position="290"/>
        <end position="336"/>
    </location>
</feature>
<feature type="compositionally biased region" description="Polar residues" evidence="2">
    <location>
        <begin position="127"/>
        <end position="139"/>
    </location>
</feature>
<feature type="compositionally biased region" description="Low complexity" evidence="2">
    <location>
        <begin position="302"/>
        <end position="318"/>
    </location>
</feature>
<feature type="modified residue" description="Phosphoserine" evidence="1">
    <location>
        <position position="115"/>
    </location>
</feature>
<feature type="modified residue" description="Phosphoserine" evidence="1">
    <location>
        <position position="141"/>
    </location>
</feature>
<feature type="modified residue" description="Phosphoserine" evidence="5">
    <location>
        <position position="269"/>
    </location>
</feature>
<feature type="modified residue" description="Phosphoserine" evidence="1">
    <location>
        <position position="296"/>
    </location>
</feature>
<feature type="modified residue" description="Phosphoserine" evidence="1">
    <location>
        <position position="342"/>
    </location>
</feature>
<feature type="cross-link" description="Glycyl lysine isopeptide (Lys-Gly) (interchain with G-Cter in SUMO2)" evidence="1">
    <location>
        <position position="239"/>
    </location>
</feature>
<feature type="splice variant" id="VSP_026277" description="In isoform 2 and isoform 3." evidence="3">
    <original>FRIGKNLLFNLRK</original>
    <variation>PLPSLFQ</variation>
    <location>
        <begin position="3"/>
        <end position="15"/>
    </location>
</feature>
<feature type="splice variant" id="VSP_026278" description="In isoform 3." evidence="3">
    <original>ALAHREEESLVVPTKRRRVTAEMEGKYIIHMPKGTTPRTRKILEQ</original>
    <variation>GEGTWASVGQSCRGIWVSRGCECVRVCVCVTSKCGEVLQRPSESH</variation>
    <location>
        <begin position="174"/>
        <end position="218"/>
    </location>
</feature>
<feature type="splice variant" id="VSP_026279" description="In isoform 3." evidence="3">
    <location>
        <begin position="219"/>
        <end position="413"/>
    </location>
</feature>
<feature type="splice variant" id="VSP_026280" description="In isoform 2." evidence="3">
    <original>KSSAEVKFAIKRTLVGPRGSSSSESLGAQMDHAGTVSVFKRLGQRTF</original>
    <variation>PTVRCILPDPPAPLASQRPPRRRWRRTCKDC</variation>
    <location>
        <begin position="367"/>
        <end position="413"/>
    </location>
</feature>
<feature type="sequence conflict" description="In Ref. 1; BAC25259." evidence="4" ref="1">
    <original>G</original>
    <variation>K</variation>
    <location>
        <position position="49"/>
    </location>
</feature>
<feature type="sequence conflict" description="In Ref. 1; BAC25259." evidence="4" ref="1">
    <original>A</original>
    <variation>P</variation>
    <location>
        <position position="55"/>
    </location>
</feature>
<feature type="sequence conflict" description="In Ref. 1; BAC25259." evidence="4" ref="1">
    <original>S</original>
    <variation>N</variation>
    <location>
        <position position="66"/>
    </location>
</feature>
<feature type="sequence conflict" description="In Ref. 1; BAC25259." evidence="4" ref="1">
    <original>E</original>
    <variation>K</variation>
    <location>
        <position position="74"/>
    </location>
</feature>
<feature type="sequence conflict" description="In Ref. 1; BAC25259." evidence="4" ref="1">
    <original>E</original>
    <variation>D</variation>
    <location>
        <position position="179"/>
    </location>
</feature>
<feature type="sequence conflict" description="In Ref. 1; BAC25259." evidence="4" ref="1">
    <original>M</original>
    <variation>N</variation>
    <location>
        <position position="196"/>
    </location>
</feature>
<feature type="sequence conflict" description="In Ref. 1; BAC25259." evidence="4" ref="1">
    <original>E</original>
    <variation>G</variation>
    <location>
        <position position="197"/>
    </location>
</feature>
<feature type="sequence conflict" description="In Ref. 1; BAC25259." evidence="4" ref="1">
    <original>K</original>
    <variation>D</variation>
    <location>
        <position position="206"/>
    </location>
</feature>
<feature type="sequence conflict" description="In Ref. 1; BAC25259/BAC36772." evidence="4" ref="1">
    <original>A</original>
    <variation>T</variation>
    <location>
        <position position="308"/>
    </location>
</feature>
<feature type="sequence conflict" description="In Ref. 1; BAC25259/BAC36772." evidence="4" ref="1">
    <original>S</original>
    <variation>T</variation>
    <location>
        <position position="313"/>
    </location>
</feature>
<feature type="sequence conflict" description="In Ref. 1; BAC25259/BAC36772." evidence="4" ref="1">
    <original>Q</original>
    <variation>E</variation>
    <location>
        <position position="332"/>
    </location>
</feature>